<reference key="1">
    <citation type="journal article" date="2012" name="Microb. Cell Fact.">
        <title>De novo sequencing, assembly and analysis of the genome of the laboratory strain Saccharomyces cerevisiae CEN.PK113-7D, a model for modern industrial biotechnology.</title>
        <authorList>
            <person name="Nijkamp J.F."/>
            <person name="van den Broek M."/>
            <person name="Datema E."/>
            <person name="de Kok S."/>
            <person name="Bosman L."/>
            <person name="Luttik M.A."/>
            <person name="Daran-Lapujade P."/>
            <person name="Vongsangnak W."/>
            <person name="Nielsen J."/>
            <person name="Heijne W.H.M."/>
            <person name="Klaassen P."/>
            <person name="Paddon C.J."/>
            <person name="Platt D."/>
            <person name="Koetter P."/>
            <person name="van Ham R.C."/>
            <person name="Reinders M.J.T."/>
            <person name="Pronk J.T."/>
            <person name="de Ridder D."/>
            <person name="Daran J.-M."/>
        </authorList>
    </citation>
    <scope>NUCLEOTIDE SEQUENCE [LARGE SCALE GENOMIC DNA]</scope>
    <source>
        <strain>CEN.PK113-7D</strain>
    </source>
</reference>
<reference key="2">
    <citation type="journal article" date="2002" name="Yeast">
        <title>Functional analysis of structural genes for NAD(+)-dependent formate dehydrogenase in Saccharomyces cerevisiae.</title>
        <authorList>
            <person name="Overkamp K.M."/>
            <person name="Koetter P."/>
            <person name="van der Hoek R."/>
            <person name="Schoondermark-Stolk S."/>
            <person name="Luttik M.A.H."/>
            <person name="van Dijken J.P."/>
            <person name="Pronk J.T."/>
        </authorList>
    </citation>
    <scope>FUNCTION</scope>
    <scope>SUBCELLULAR LOCATION</scope>
    <scope>INDUCTION</scope>
    <source>
        <strain>CEN.PK113-7D</strain>
    </source>
</reference>
<keyword id="KW-0963">Cytoplasm</keyword>
<keyword id="KW-0520">NAD</keyword>
<keyword id="KW-0560">Oxidoreductase</keyword>
<protein>
    <recommendedName>
        <fullName evidence="1">Formate dehydrogenase 1</fullName>
        <shortName evidence="1">FDH 1</shortName>
        <ecNumber evidence="1">1.17.1.9</ecNumber>
    </recommendedName>
    <alternativeName>
        <fullName evidence="1">NAD-dependent formate dehydrogenase 1</fullName>
    </alternativeName>
</protein>
<evidence type="ECO:0000255" key="1">
    <source>
        <dbReference type="HAMAP-Rule" id="MF_03210"/>
    </source>
</evidence>
<evidence type="ECO:0000269" key="2">
    <source>
    </source>
</evidence>
<name>FDH1_YEASC</name>
<feature type="chain" id="PRO_0000423512" description="Formate dehydrogenase 1">
    <location>
        <begin position="1"/>
        <end position="376"/>
    </location>
</feature>
<feature type="binding site" evidence="1">
    <location>
        <position position="97"/>
    </location>
    <ligand>
        <name>substrate</name>
    </ligand>
</feature>
<feature type="binding site" evidence="1">
    <location>
        <position position="121"/>
    </location>
    <ligand>
        <name>substrate</name>
    </ligand>
</feature>
<feature type="binding site" evidence="1">
    <location>
        <begin position="176"/>
        <end position="177"/>
    </location>
    <ligand>
        <name>NAD(+)</name>
        <dbReference type="ChEBI" id="CHEBI:57540"/>
    </ligand>
</feature>
<feature type="binding site" evidence="1">
    <location>
        <position position="197"/>
    </location>
    <ligand>
        <name>NAD(+)</name>
        <dbReference type="ChEBI" id="CHEBI:57540"/>
    </ligand>
</feature>
<feature type="binding site" evidence="1">
    <location>
        <begin position="244"/>
        <end position="248"/>
    </location>
    <ligand>
        <name>NAD(+)</name>
        <dbReference type="ChEBI" id="CHEBI:57540"/>
    </ligand>
</feature>
<feature type="binding site" evidence="1">
    <location>
        <position position="270"/>
    </location>
    <ligand>
        <name>NAD(+)</name>
        <dbReference type="ChEBI" id="CHEBI:57540"/>
    </ligand>
</feature>
<feature type="binding site" evidence="1">
    <location>
        <position position="296"/>
    </location>
    <ligand>
        <name>NAD(+)</name>
        <dbReference type="ChEBI" id="CHEBI:57540"/>
    </ligand>
</feature>
<feature type="binding site" evidence="1">
    <location>
        <begin position="325"/>
        <end position="328"/>
    </location>
    <ligand>
        <name>NAD(+)</name>
        <dbReference type="ChEBI" id="CHEBI:57540"/>
    </ligand>
</feature>
<feature type="site" description="Important for catalytic activity" evidence="1">
    <location>
        <position position="272"/>
    </location>
</feature>
<feature type="site" description="Important for catalytic activity" evidence="1">
    <location>
        <position position="325"/>
    </location>
</feature>
<dbReference type="EC" id="1.17.1.9" evidence="1"/>
<dbReference type="EMBL" id="CM001536">
    <property type="protein sequence ID" value="EIW07815.1"/>
    <property type="molecule type" value="Genomic_DNA"/>
</dbReference>
<dbReference type="SMR" id="N1P3Y5"/>
<dbReference type="HOGENOM" id="CLU_019796_0_0_1"/>
<dbReference type="OrthoDB" id="14951at4893"/>
<dbReference type="Proteomes" id="UP000013192">
    <property type="component" value="Chromosome XV"/>
</dbReference>
<dbReference type="GO" id="GO:0005829">
    <property type="term" value="C:cytosol"/>
    <property type="evidence" value="ECO:0007669"/>
    <property type="project" value="TreeGrafter"/>
</dbReference>
<dbReference type="GO" id="GO:0008863">
    <property type="term" value="F:formate dehydrogenase (NAD+) activity"/>
    <property type="evidence" value="ECO:0007669"/>
    <property type="project" value="UniProtKB-UniRule"/>
</dbReference>
<dbReference type="GO" id="GO:0051287">
    <property type="term" value="F:NAD binding"/>
    <property type="evidence" value="ECO:0007669"/>
    <property type="project" value="InterPro"/>
</dbReference>
<dbReference type="GO" id="GO:0016616">
    <property type="term" value="F:oxidoreductase activity, acting on the CH-OH group of donors, NAD or NADP as acceptor"/>
    <property type="evidence" value="ECO:0007669"/>
    <property type="project" value="InterPro"/>
</dbReference>
<dbReference type="GO" id="GO:0042183">
    <property type="term" value="P:formate catabolic process"/>
    <property type="evidence" value="ECO:0007669"/>
    <property type="project" value="UniProtKB-UniRule"/>
</dbReference>
<dbReference type="CDD" id="cd05302">
    <property type="entry name" value="FDH"/>
    <property type="match status" value="1"/>
</dbReference>
<dbReference type="FunFam" id="3.40.50.720:FF:000057">
    <property type="entry name" value="Formate dehydrogenase"/>
    <property type="match status" value="1"/>
</dbReference>
<dbReference type="FunFam" id="3.40.50.720:FF:000862">
    <property type="entry name" value="Formate dehydrogenase chloroplastic/mitochondrial"/>
    <property type="match status" value="1"/>
</dbReference>
<dbReference type="Gene3D" id="3.40.50.720">
    <property type="entry name" value="NAD(P)-binding Rossmann-like Domain"/>
    <property type="match status" value="2"/>
</dbReference>
<dbReference type="HAMAP" id="MF_03210">
    <property type="entry name" value="Formate_dehydrogenase"/>
    <property type="match status" value="1"/>
</dbReference>
<dbReference type="InterPro" id="IPR006139">
    <property type="entry name" value="D-isomer_2_OHA_DH_cat_dom"/>
</dbReference>
<dbReference type="InterPro" id="IPR029753">
    <property type="entry name" value="D-isomer_DH_CS"/>
</dbReference>
<dbReference type="InterPro" id="IPR006140">
    <property type="entry name" value="D-isomer_DH_NAD-bd"/>
</dbReference>
<dbReference type="InterPro" id="IPR033689">
    <property type="entry name" value="FDH_NAD-dep"/>
</dbReference>
<dbReference type="InterPro" id="IPR036291">
    <property type="entry name" value="NAD(P)-bd_dom_sf"/>
</dbReference>
<dbReference type="NCBIfam" id="NF005750">
    <property type="entry name" value="PRK07574.1"/>
    <property type="match status" value="1"/>
</dbReference>
<dbReference type="PANTHER" id="PTHR42938">
    <property type="entry name" value="FORMATE DEHYDROGENASE 1"/>
    <property type="match status" value="1"/>
</dbReference>
<dbReference type="PANTHER" id="PTHR42938:SF9">
    <property type="entry name" value="FORMATE DEHYDROGENASE 1"/>
    <property type="match status" value="1"/>
</dbReference>
<dbReference type="Pfam" id="PF00389">
    <property type="entry name" value="2-Hacid_dh"/>
    <property type="match status" value="1"/>
</dbReference>
<dbReference type="Pfam" id="PF02826">
    <property type="entry name" value="2-Hacid_dh_C"/>
    <property type="match status" value="1"/>
</dbReference>
<dbReference type="SUPFAM" id="SSF52283">
    <property type="entry name" value="Formate/glycerate dehydrogenase catalytic domain-like"/>
    <property type="match status" value="1"/>
</dbReference>
<dbReference type="SUPFAM" id="SSF51735">
    <property type="entry name" value="NAD(P)-binding Rossmann-fold domains"/>
    <property type="match status" value="1"/>
</dbReference>
<dbReference type="PROSITE" id="PS00670">
    <property type="entry name" value="D_2_HYDROXYACID_DH_2"/>
    <property type="match status" value="1"/>
</dbReference>
<dbReference type="PROSITE" id="PS00671">
    <property type="entry name" value="D_2_HYDROXYACID_DH_3"/>
    <property type="match status" value="1"/>
</dbReference>
<organism>
    <name type="scientific">Saccharomyces cerevisiae (strain CEN.PK113-7D)</name>
    <name type="common">Baker's yeast</name>
    <dbReference type="NCBI Taxonomy" id="889517"/>
    <lineage>
        <taxon>Eukaryota</taxon>
        <taxon>Fungi</taxon>
        <taxon>Dikarya</taxon>
        <taxon>Ascomycota</taxon>
        <taxon>Saccharomycotina</taxon>
        <taxon>Saccharomycetes</taxon>
        <taxon>Saccharomycetales</taxon>
        <taxon>Saccharomycetaceae</taxon>
        <taxon>Saccharomyces</taxon>
    </lineage>
</organism>
<comment type="function">
    <text evidence="1">Catalyzes the NAD(+)-dependent oxidation of formate to carbon dioxide. Formate oxidation is the final step in the methanol oxidation pathway in methylotrophic microorganisms. Has a role in the detoxification of exogenous formate in non-methylotrophic organisms.</text>
</comment>
<comment type="catalytic activity">
    <reaction evidence="1">
        <text>formate + NAD(+) = CO2 + NADH</text>
        <dbReference type="Rhea" id="RHEA:15985"/>
        <dbReference type="ChEBI" id="CHEBI:15740"/>
        <dbReference type="ChEBI" id="CHEBI:16526"/>
        <dbReference type="ChEBI" id="CHEBI:57540"/>
        <dbReference type="ChEBI" id="CHEBI:57945"/>
        <dbReference type="EC" id="1.17.1.9"/>
    </reaction>
</comment>
<comment type="subunit">
    <text evidence="1">Homodimer.</text>
</comment>
<comment type="subcellular location">
    <subcellularLocation>
        <location evidence="1 2">Cytoplasm</location>
    </subcellularLocation>
</comment>
<comment type="induction">
    <text evidence="2">Induced by formate.</text>
</comment>
<comment type="similarity">
    <text evidence="1">Belongs to the D-isomer specific 2-hydroxyacid dehydrogenase family. FDH subfamily.</text>
</comment>
<gene>
    <name type="primary">FDH1</name>
    <name type="ORF">CENPK1137D_2402</name>
</gene>
<sequence length="376" mass="41714">MSKGKVLLVLYEGGKHAEEQEKLLGCIENELGIRNFIEEQGYELVTTIDKDPEPTSTVDRELKDAEIVITTPFFPAYISRNRIAEAPNLKLCVTAGVGSDHVDLEAANERKITVTEVTGSNVVSVAEHVMATILVLIRNYNGGHQQAINGEWDIAGVAKNEYDLEDKIISTVGAGRIGYRVLERLVAFNPKKLLYYDYQELPAEAINRLNEASKLFNGRGDIVQRVEKLEDMVAQSDVVTINCPLHKDSRGLFNKKLISHMKDGAYLVNTARGAICVAEDVAEAVKSGKLAGYGGDVWDKQPAPKDHPWRTMDNKDHVGNAMTVHISGTSLDAQKRYAQGVKNILNSYFSKKFDYRPQDIIVQNGSYATRAYGQKK</sequence>
<accession>N1P3Y5</accession>
<proteinExistence type="evidence at transcript level"/>